<organism>
    <name type="scientific">Listeria innocua serovar 6a (strain ATCC BAA-680 / CLIP 11262)</name>
    <dbReference type="NCBI Taxonomy" id="272626"/>
    <lineage>
        <taxon>Bacteria</taxon>
        <taxon>Bacillati</taxon>
        <taxon>Bacillota</taxon>
        <taxon>Bacilli</taxon>
        <taxon>Bacillales</taxon>
        <taxon>Listeriaceae</taxon>
        <taxon>Listeria</taxon>
    </lineage>
</organism>
<evidence type="ECO:0000255" key="1"/>
<evidence type="ECO:0000305" key="2"/>
<gene>
    <name type="ordered locus">lin0215</name>
</gene>
<keyword id="KW-1003">Cell membrane</keyword>
<keyword id="KW-0472">Membrane</keyword>
<keyword id="KW-0762">Sugar transport</keyword>
<keyword id="KW-0812">Transmembrane</keyword>
<keyword id="KW-1133">Transmembrane helix</keyword>
<keyword id="KW-0813">Transport</keyword>
<name>Y215_LISIN</name>
<protein>
    <recommendedName>
        <fullName>Putative sugar uptake protein lin0215</fullName>
    </recommendedName>
</protein>
<feature type="chain" id="PRO_0000213656" description="Putative sugar uptake protein lin0215">
    <location>
        <begin position="1"/>
        <end position="286"/>
    </location>
</feature>
<feature type="transmembrane region" description="Helical" evidence="1">
    <location>
        <begin position="4"/>
        <end position="26"/>
    </location>
</feature>
<feature type="transmembrane region" description="Helical" evidence="1">
    <location>
        <begin position="33"/>
        <end position="55"/>
    </location>
</feature>
<feature type="transmembrane region" description="Helical" evidence="1">
    <location>
        <begin position="114"/>
        <end position="136"/>
    </location>
</feature>
<feature type="transmembrane region" description="Helical" evidence="1">
    <location>
        <begin position="149"/>
        <end position="167"/>
    </location>
</feature>
<feature type="transmembrane region" description="Helical" evidence="1">
    <location>
        <begin position="177"/>
        <end position="194"/>
    </location>
</feature>
<feature type="transmembrane region" description="Helical" evidence="1">
    <location>
        <begin position="207"/>
        <end position="226"/>
    </location>
</feature>
<feature type="transmembrane region" description="Helical" evidence="1">
    <location>
        <begin position="230"/>
        <end position="252"/>
    </location>
</feature>
<feature type="transmembrane region" description="Helical" evidence="1">
    <location>
        <begin position="264"/>
        <end position="283"/>
    </location>
</feature>
<dbReference type="EMBL" id="AL596163">
    <property type="protein sequence ID" value="CAC95448.1"/>
    <property type="molecule type" value="Genomic_DNA"/>
</dbReference>
<dbReference type="PIR" id="AH1459">
    <property type="entry name" value="AH1459"/>
</dbReference>
<dbReference type="RefSeq" id="WP_003759937.1">
    <property type="nucleotide sequence ID" value="NC_003212.1"/>
</dbReference>
<dbReference type="SMR" id="Q92F91"/>
<dbReference type="STRING" id="272626.gene:17564527"/>
<dbReference type="DNASU" id="1128619"/>
<dbReference type="KEGG" id="lin:lin0215"/>
<dbReference type="eggNOG" id="COG4975">
    <property type="taxonomic scope" value="Bacteria"/>
</dbReference>
<dbReference type="HOGENOM" id="CLU_076024_0_0_9"/>
<dbReference type="OrthoDB" id="1452595at2"/>
<dbReference type="Proteomes" id="UP000002513">
    <property type="component" value="Chromosome"/>
</dbReference>
<dbReference type="GO" id="GO:0005886">
    <property type="term" value="C:plasma membrane"/>
    <property type="evidence" value="ECO:0007669"/>
    <property type="project" value="UniProtKB-SubCell"/>
</dbReference>
<dbReference type="GO" id="GO:0015144">
    <property type="term" value="F:carbohydrate transmembrane transporter activity"/>
    <property type="evidence" value="ECO:0007669"/>
    <property type="project" value="InterPro"/>
</dbReference>
<dbReference type="CDD" id="cd23112">
    <property type="entry name" value="glucose_uptake_GlcU"/>
    <property type="match status" value="1"/>
</dbReference>
<dbReference type="Gene3D" id="1.10.3730.20">
    <property type="match status" value="1"/>
</dbReference>
<dbReference type="InterPro" id="IPR010651">
    <property type="entry name" value="Sugar_transport"/>
</dbReference>
<dbReference type="PANTHER" id="PTHR16119">
    <property type="entry name" value="TRANSMEMBRANE PROTEIN 144"/>
    <property type="match status" value="1"/>
</dbReference>
<dbReference type="PANTHER" id="PTHR16119:SF17">
    <property type="entry name" value="TRANSMEMBRANE PROTEIN 144"/>
    <property type="match status" value="1"/>
</dbReference>
<dbReference type="Pfam" id="PF06800">
    <property type="entry name" value="Sugar_transport"/>
    <property type="match status" value="1"/>
</dbReference>
<dbReference type="SUPFAM" id="SSF103481">
    <property type="entry name" value="Multidrug resistance efflux transporter EmrE"/>
    <property type="match status" value="2"/>
</dbReference>
<reference key="1">
    <citation type="journal article" date="2001" name="Science">
        <title>Comparative genomics of Listeria species.</title>
        <authorList>
            <person name="Glaser P."/>
            <person name="Frangeul L."/>
            <person name="Buchrieser C."/>
            <person name="Rusniok C."/>
            <person name="Amend A."/>
            <person name="Baquero F."/>
            <person name="Berche P."/>
            <person name="Bloecker H."/>
            <person name="Brandt P."/>
            <person name="Chakraborty T."/>
            <person name="Charbit A."/>
            <person name="Chetouani F."/>
            <person name="Couve E."/>
            <person name="de Daruvar A."/>
            <person name="Dehoux P."/>
            <person name="Domann E."/>
            <person name="Dominguez-Bernal G."/>
            <person name="Duchaud E."/>
            <person name="Durant L."/>
            <person name="Dussurget O."/>
            <person name="Entian K.-D."/>
            <person name="Fsihi H."/>
            <person name="Garcia-del Portillo F."/>
            <person name="Garrido P."/>
            <person name="Gautier L."/>
            <person name="Goebel W."/>
            <person name="Gomez-Lopez N."/>
            <person name="Hain T."/>
            <person name="Hauf J."/>
            <person name="Jackson D."/>
            <person name="Jones L.-M."/>
            <person name="Kaerst U."/>
            <person name="Kreft J."/>
            <person name="Kuhn M."/>
            <person name="Kunst F."/>
            <person name="Kurapkat G."/>
            <person name="Madueno E."/>
            <person name="Maitournam A."/>
            <person name="Mata Vicente J."/>
            <person name="Ng E."/>
            <person name="Nedjari H."/>
            <person name="Nordsiek G."/>
            <person name="Novella S."/>
            <person name="de Pablos B."/>
            <person name="Perez-Diaz J.-C."/>
            <person name="Purcell R."/>
            <person name="Remmel B."/>
            <person name="Rose M."/>
            <person name="Schlueter T."/>
            <person name="Simoes N."/>
            <person name="Tierrez A."/>
            <person name="Vazquez-Boland J.-A."/>
            <person name="Voss H."/>
            <person name="Wehland J."/>
            <person name="Cossart P."/>
        </authorList>
    </citation>
    <scope>NUCLEOTIDE SEQUENCE [LARGE SCALE GENOMIC DNA]</scope>
    <source>
        <strain>ATCC BAA-680 / CLIP 11262</strain>
    </source>
</reference>
<proteinExistence type="inferred from homology"/>
<accession>Q92F91</accession>
<comment type="subcellular location">
    <subcellularLocation>
        <location evidence="2">Cell membrane</location>
        <topology evidence="2">Multi-pass membrane protein</topology>
    </subcellularLocation>
</comment>
<comment type="similarity">
    <text evidence="2">Belongs to the GRP transporter (TC 2.A.7.5) family.</text>
</comment>
<sequence>MNIMIALIPALLWGTVPLIITKFGGSTRQQTMGMTLGALTFAVIVFFFTDPVYTLKTVGISFITGCLWTVGQMFQLRAFKIIGVSKAMPISTGMQLVGTTLCGVILFHEWDTTLRIILGFIALALIVGGIFLTSYAEKEEDGTNALKQGLITLVISSLGYVGLVVLIQGFKIDGINAILPQAIGMVLSALIMTHSGGTEKRFNKRTLLLIIPGMIWAAGNVAMVHANQLVGVATGFSLSQLGVVISTIGGIVLLKEKKTQKEMLYVIVGVVLVVLGGILIGVAKGA</sequence>